<proteinExistence type="inferred from homology"/>
<comment type="function">
    <text evidence="1">Promotes RNA polymerase assembly. Latches the N- and C-terminal regions of the beta' subunit thereby facilitating its interaction with the beta and alpha subunits.</text>
</comment>
<comment type="catalytic activity">
    <reaction evidence="1">
        <text>RNA(n) + a ribonucleoside 5'-triphosphate = RNA(n+1) + diphosphate</text>
        <dbReference type="Rhea" id="RHEA:21248"/>
        <dbReference type="Rhea" id="RHEA-COMP:14527"/>
        <dbReference type="Rhea" id="RHEA-COMP:17342"/>
        <dbReference type="ChEBI" id="CHEBI:33019"/>
        <dbReference type="ChEBI" id="CHEBI:61557"/>
        <dbReference type="ChEBI" id="CHEBI:140395"/>
        <dbReference type="EC" id="2.7.7.6"/>
    </reaction>
</comment>
<comment type="subunit">
    <text evidence="1">The RNAP catalytic core consists of 2 alpha, 1 beta, 1 beta' and 1 omega subunit. When a sigma factor is associated with the core the holoenzyme is formed, which can initiate transcription.</text>
</comment>
<comment type="similarity">
    <text evidence="1">Belongs to the RNA polymerase subunit omega family.</text>
</comment>
<evidence type="ECO:0000255" key="1">
    <source>
        <dbReference type="HAMAP-Rule" id="MF_00366"/>
    </source>
</evidence>
<sequence length="133" mass="14514">MARVTVEDCVDKVENRFELVLLAGHRARQISQGAPITVDRDNDKNPVVALREIADETLSPDDLKEDLIHSLQKHVEVDEPEAAPAQIANAAEEIAEGIAEAGEEDVVTFDRMSEEELLAGIEGLVAPEKNDGF</sequence>
<gene>
    <name evidence="1" type="primary">rpoZ</name>
    <name type="ordered locus">BAbS19_I06280</name>
</gene>
<organism>
    <name type="scientific">Brucella abortus (strain S19)</name>
    <dbReference type="NCBI Taxonomy" id="430066"/>
    <lineage>
        <taxon>Bacteria</taxon>
        <taxon>Pseudomonadati</taxon>
        <taxon>Pseudomonadota</taxon>
        <taxon>Alphaproteobacteria</taxon>
        <taxon>Hyphomicrobiales</taxon>
        <taxon>Brucellaceae</taxon>
        <taxon>Brucella/Ochrobactrum group</taxon>
        <taxon>Brucella</taxon>
    </lineage>
</organism>
<protein>
    <recommendedName>
        <fullName evidence="1">DNA-directed RNA polymerase subunit omega</fullName>
        <shortName evidence="1">RNAP omega subunit</shortName>
        <ecNumber evidence="1">2.7.7.6</ecNumber>
    </recommendedName>
    <alternativeName>
        <fullName evidence="1">RNA polymerase omega subunit</fullName>
    </alternativeName>
    <alternativeName>
        <fullName evidence="1">Transcriptase subunit omega</fullName>
    </alternativeName>
</protein>
<dbReference type="EC" id="2.7.7.6" evidence="1"/>
<dbReference type="EMBL" id="CP000887">
    <property type="protein sequence ID" value="ACD72159.1"/>
    <property type="molecule type" value="Genomic_DNA"/>
</dbReference>
<dbReference type="RefSeq" id="WP_002963795.1">
    <property type="nucleotide sequence ID" value="NC_010742.1"/>
</dbReference>
<dbReference type="SMR" id="B2SAC9"/>
<dbReference type="GeneID" id="93016943"/>
<dbReference type="KEGG" id="bmc:BAbS19_I06280"/>
<dbReference type="HOGENOM" id="CLU_125406_2_0_5"/>
<dbReference type="Proteomes" id="UP000002565">
    <property type="component" value="Chromosome 1"/>
</dbReference>
<dbReference type="GO" id="GO:0000428">
    <property type="term" value="C:DNA-directed RNA polymerase complex"/>
    <property type="evidence" value="ECO:0007669"/>
    <property type="project" value="UniProtKB-KW"/>
</dbReference>
<dbReference type="GO" id="GO:0003677">
    <property type="term" value="F:DNA binding"/>
    <property type="evidence" value="ECO:0007669"/>
    <property type="project" value="UniProtKB-UniRule"/>
</dbReference>
<dbReference type="GO" id="GO:0003899">
    <property type="term" value="F:DNA-directed RNA polymerase activity"/>
    <property type="evidence" value="ECO:0007669"/>
    <property type="project" value="UniProtKB-UniRule"/>
</dbReference>
<dbReference type="GO" id="GO:0006351">
    <property type="term" value="P:DNA-templated transcription"/>
    <property type="evidence" value="ECO:0007669"/>
    <property type="project" value="UniProtKB-UniRule"/>
</dbReference>
<dbReference type="Gene3D" id="3.90.940.10">
    <property type="match status" value="1"/>
</dbReference>
<dbReference type="HAMAP" id="MF_00366">
    <property type="entry name" value="RNApol_bact_RpoZ"/>
    <property type="match status" value="1"/>
</dbReference>
<dbReference type="InterPro" id="IPR003716">
    <property type="entry name" value="DNA-dir_RNA_pol_omega"/>
</dbReference>
<dbReference type="InterPro" id="IPR006110">
    <property type="entry name" value="Pol_omega/Rpo6/RPB6"/>
</dbReference>
<dbReference type="InterPro" id="IPR036161">
    <property type="entry name" value="RPB6/omega-like_sf"/>
</dbReference>
<dbReference type="NCBIfam" id="TIGR00690">
    <property type="entry name" value="rpoZ"/>
    <property type="match status" value="1"/>
</dbReference>
<dbReference type="PANTHER" id="PTHR34476">
    <property type="entry name" value="DNA-DIRECTED RNA POLYMERASE SUBUNIT OMEGA"/>
    <property type="match status" value="1"/>
</dbReference>
<dbReference type="PANTHER" id="PTHR34476:SF1">
    <property type="entry name" value="DNA-DIRECTED RNA POLYMERASE SUBUNIT OMEGA"/>
    <property type="match status" value="1"/>
</dbReference>
<dbReference type="Pfam" id="PF01192">
    <property type="entry name" value="RNA_pol_Rpb6"/>
    <property type="match status" value="1"/>
</dbReference>
<dbReference type="SMART" id="SM01409">
    <property type="entry name" value="RNA_pol_Rpb6"/>
    <property type="match status" value="1"/>
</dbReference>
<dbReference type="SUPFAM" id="SSF63562">
    <property type="entry name" value="RPB6/omega subunit-like"/>
    <property type="match status" value="1"/>
</dbReference>
<reference key="1">
    <citation type="journal article" date="2008" name="PLoS ONE">
        <title>Genome sequence of Brucella abortus vaccine strain S19 compared to virulent strains yields candidate virulence genes.</title>
        <authorList>
            <person name="Crasta O.R."/>
            <person name="Folkerts O."/>
            <person name="Fei Z."/>
            <person name="Mane S.P."/>
            <person name="Evans C."/>
            <person name="Martino-Catt S."/>
            <person name="Bricker B."/>
            <person name="Yu G."/>
            <person name="Du L."/>
            <person name="Sobral B.W."/>
        </authorList>
    </citation>
    <scope>NUCLEOTIDE SEQUENCE [LARGE SCALE GENOMIC DNA]</scope>
    <source>
        <strain>S19</strain>
    </source>
</reference>
<name>RPOZ_BRUA1</name>
<keyword id="KW-0240">DNA-directed RNA polymerase</keyword>
<keyword id="KW-0548">Nucleotidyltransferase</keyword>
<keyword id="KW-0804">Transcription</keyword>
<keyword id="KW-0808">Transferase</keyword>
<accession>B2SAC9</accession>
<feature type="chain" id="PRO_1000121194" description="DNA-directed RNA polymerase subunit omega">
    <location>
        <begin position="1"/>
        <end position="133"/>
    </location>
</feature>